<proteinExistence type="evidence at protein level"/>
<accession>Q61559</accession>
<accession>Q9QUR0</accession>
<accession>Q9R2A5</accession>
<sequence>MGMPLPWALSLLLVLLPQTWGSETRPPLMYHLTAVSNPSTGLPSFWATGWLGPQQYLTYNSLRQEADPCGAWMWENQVSWYWEKETTDLKSKEQLFLEALKTLEKILNGTYTLQGLLGCELASDNSSVPTAVFALNGEEFMKFNPRIGNWTGEWPETEIVANLWMKQPDAARKESEFLLNSCPERLLGHLERGRRNLEWKEPPSMRLKARPGNSGSSVLTCAAFSFYPPELKFRFLRNGLASGSGNCSTGPNGDGSFHAWSLLEVKRGDEHHYQCQVEHEGLAQPLTVDLDSSARSSVPVVGIVLGLLLVVVAIAGGVLLWGRMRSGLPAPWLSLSGDDSGDLLPGGNLPPEAEPQGANAFPATS</sequence>
<dbReference type="EMBL" id="D37874">
    <property type="protein sequence ID" value="BAA07111.1"/>
    <property type="molecule type" value="mRNA"/>
</dbReference>
<dbReference type="EMBL" id="D37873">
    <property type="protein sequence ID" value="BAA07110.1"/>
    <property type="molecule type" value="Genomic_DNA"/>
</dbReference>
<dbReference type="EMBL" id="L17022">
    <property type="protein sequence ID" value="AAA16904.1"/>
    <property type="molecule type" value="mRNA"/>
</dbReference>
<dbReference type="EMBL" id="D37903">
    <property type="protein sequence ID" value="BAA07134.1"/>
    <property type="molecule type" value="Genomic_DNA"/>
</dbReference>
<dbReference type="EMBL" id="D37905">
    <property type="protein sequence ID" value="BAA07135.1"/>
    <property type="molecule type" value="Genomic_DNA"/>
</dbReference>
<dbReference type="EMBL" id="D37907">
    <property type="protein sequence ID" value="BAA07136.1"/>
    <property type="molecule type" value="Genomic_DNA"/>
</dbReference>
<dbReference type="EMBL" id="D37909">
    <property type="protein sequence ID" value="BAA07137.1"/>
    <property type="molecule type" value="Genomic_DNA"/>
</dbReference>
<dbReference type="EMBL" id="D37911">
    <property type="protein sequence ID" value="BAA07138.1"/>
    <property type="molecule type" value="Genomic_DNA"/>
</dbReference>
<dbReference type="EMBL" id="D37913">
    <property type="protein sequence ID" value="BAA07139.1"/>
    <property type="molecule type" value="Genomic_DNA"/>
</dbReference>
<dbReference type="CCDS" id="CCDS52243.1"/>
<dbReference type="PIR" id="I56197">
    <property type="entry name" value="I56197"/>
</dbReference>
<dbReference type="RefSeq" id="NP_034319.2">
    <property type="nucleotide sequence ID" value="NM_010189.3"/>
</dbReference>
<dbReference type="SMR" id="Q61559"/>
<dbReference type="FunCoup" id="Q61559">
    <property type="interactions" value="93"/>
</dbReference>
<dbReference type="STRING" id="10090.ENSMUSP00000003512"/>
<dbReference type="GlyCosmos" id="Q61559">
    <property type="glycosylation" value="4 sites, No reported glycans"/>
</dbReference>
<dbReference type="GlyGen" id="Q61559">
    <property type="glycosylation" value="4 sites, 1 N-linked glycan (1 site)"/>
</dbReference>
<dbReference type="PhosphoSitePlus" id="Q61559"/>
<dbReference type="SwissPalm" id="Q61559"/>
<dbReference type="jPOST" id="Q61559"/>
<dbReference type="PaxDb" id="10090-ENSMUSP00000003512"/>
<dbReference type="PeptideAtlas" id="Q61559"/>
<dbReference type="ProteomicsDB" id="272976"/>
<dbReference type="Pumba" id="Q61559"/>
<dbReference type="ABCD" id="Q61559">
    <property type="antibodies" value="2 sequenced antibodies"/>
</dbReference>
<dbReference type="Antibodypedia" id="1522">
    <property type="antibodies" value="382 antibodies from 34 providers"/>
</dbReference>
<dbReference type="DNASU" id="14132"/>
<dbReference type="Ensembl" id="ENSMUST00000003512.9">
    <property type="protein sequence ID" value="ENSMUSP00000003512.8"/>
    <property type="gene ID" value="ENSMUSG00000003420.9"/>
</dbReference>
<dbReference type="GeneID" id="14132"/>
<dbReference type="KEGG" id="mmu:14132"/>
<dbReference type="UCSC" id="uc009gtf.2">
    <property type="organism name" value="mouse"/>
</dbReference>
<dbReference type="AGR" id="MGI:103017"/>
<dbReference type="CTD" id="2217"/>
<dbReference type="MGI" id="MGI:103017">
    <property type="gene designation" value="Fcgrt"/>
</dbReference>
<dbReference type="VEuPathDB" id="HostDB:ENSMUSG00000003420"/>
<dbReference type="eggNOG" id="ENOG502RTZ5">
    <property type="taxonomic scope" value="Eukaryota"/>
</dbReference>
<dbReference type="GeneTree" id="ENSGT01130000278293"/>
<dbReference type="HOGENOM" id="CLU_047501_7_0_1"/>
<dbReference type="InParanoid" id="Q61559"/>
<dbReference type="PhylomeDB" id="Q61559"/>
<dbReference type="TreeFam" id="TF336617"/>
<dbReference type="BioGRID-ORCS" id="14132">
    <property type="hits" value="5 hits in 78 CRISPR screens"/>
</dbReference>
<dbReference type="ChiTaRS" id="Fcgrt">
    <property type="organism name" value="mouse"/>
</dbReference>
<dbReference type="PRO" id="PR:Q61559"/>
<dbReference type="Proteomes" id="UP000000589">
    <property type="component" value="Chromosome 7"/>
</dbReference>
<dbReference type="RNAct" id="Q61559">
    <property type="molecule type" value="protein"/>
</dbReference>
<dbReference type="Bgee" id="ENSMUSG00000003420">
    <property type="expression patterns" value="Expressed in stroma of bone marrow and 238 other cell types or tissues"/>
</dbReference>
<dbReference type="ExpressionAtlas" id="Q61559">
    <property type="expression patterns" value="baseline and differential"/>
</dbReference>
<dbReference type="GO" id="GO:0010008">
    <property type="term" value="C:endosome membrane"/>
    <property type="evidence" value="ECO:0007669"/>
    <property type="project" value="UniProtKB-SubCell"/>
</dbReference>
<dbReference type="GO" id="GO:0005886">
    <property type="term" value="C:plasma membrane"/>
    <property type="evidence" value="ECO:0007669"/>
    <property type="project" value="UniProtKB-SubCell"/>
</dbReference>
<dbReference type="GO" id="GO:0019864">
    <property type="term" value="F:IgG binding"/>
    <property type="evidence" value="ECO:0007669"/>
    <property type="project" value="UniProtKB-KW"/>
</dbReference>
<dbReference type="CDD" id="cd21011">
    <property type="entry name" value="IgC1_MHC-like_FcRn"/>
    <property type="match status" value="1"/>
</dbReference>
<dbReference type="FunFam" id="2.60.40.10:FF:000693">
    <property type="entry name" value="IgG receptor FcRn large subunit p51"/>
    <property type="match status" value="1"/>
</dbReference>
<dbReference type="FunFam" id="3.30.500.10:FF:000003">
    <property type="entry name" value="IgG receptor FcRn large subunit p51"/>
    <property type="match status" value="1"/>
</dbReference>
<dbReference type="Gene3D" id="2.60.40.10">
    <property type="entry name" value="Immunoglobulins"/>
    <property type="match status" value="1"/>
</dbReference>
<dbReference type="Gene3D" id="3.30.500.10">
    <property type="entry name" value="MHC class I-like antigen recognition-like"/>
    <property type="match status" value="1"/>
</dbReference>
<dbReference type="InterPro" id="IPR007110">
    <property type="entry name" value="Ig-like_dom"/>
</dbReference>
<dbReference type="InterPro" id="IPR036179">
    <property type="entry name" value="Ig-like_dom_sf"/>
</dbReference>
<dbReference type="InterPro" id="IPR013783">
    <property type="entry name" value="Ig-like_fold"/>
</dbReference>
<dbReference type="InterPro" id="IPR003006">
    <property type="entry name" value="Ig/MHC_CS"/>
</dbReference>
<dbReference type="InterPro" id="IPR003597">
    <property type="entry name" value="Ig_C1-set"/>
</dbReference>
<dbReference type="InterPro" id="IPR050208">
    <property type="entry name" value="MHC_class-I_related"/>
</dbReference>
<dbReference type="InterPro" id="IPR011161">
    <property type="entry name" value="MHC_I-like_Ag-recog"/>
</dbReference>
<dbReference type="InterPro" id="IPR037055">
    <property type="entry name" value="MHC_I-like_Ag-recog_sf"/>
</dbReference>
<dbReference type="InterPro" id="IPR011162">
    <property type="entry name" value="MHC_I/II-like_Ag-recog"/>
</dbReference>
<dbReference type="PANTHER" id="PTHR16675:SF3">
    <property type="entry name" value="IGG RECEPTOR FCRN LARGE SUBUNIT P51"/>
    <property type="match status" value="1"/>
</dbReference>
<dbReference type="PANTHER" id="PTHR16675">
    <property type="entry name" value="MHC CLASS I-RELATED"/>
    <property type="match status" value="1"/>
</dbReference>
<dbReference type="Pfam" id="PF07654">
    <property type="entry name" value="C1-set"/>
    <property type="match status" value="1"/>
</dbReference>
<dbReference type="Pfam" id="PF00129">
    <property type="entry name" value="MHC_I"/>
    <property type="match status" value="1"/>
</dbReference>
<dbReference type="SMART" id="SM00407">
    <property type="entry name" value="IGc1"/>
    <property type="match status" value="1"/>
</dbReference>
<dbReference type="SUPFAM" id="SSF48726">
    <property type="entry name" value="Immunoglobulin"/>
    <property type="match status" value="1"/>
</dbReference>
<dbReference type="SUPFAM" id="SSF54452">
    <property type="entry name" value="MHC antigen-recognition domain"/>
    <property type="match status" value="1"/>
</dbReference>
<dbReference type="PROSITE" id="PS50835">
    <property type="entry name" value="IG_LIKE"/>
    <property type="match status" value="1"/>
</dbReference>
<dbReference type="PROSITE" id="PS00290">
    <property type="entry name" value="IG_MHC"/>
    <property type="match status" value="1"/>
</dbReference>
<keyword id="KW-1003">Cell membrane</keyword>
<keyword id="KW-0903">Direct protein sequencing</keyword>
<keyword id="KW-1015">Disulfide bond</keyword>
<keyword id="KW-0967">Endosome</keyword>
<keyword id="KW-0325">Glycoprotein</keyword>
<keyword id="KW-0390">IgG-binding protein</keyword>
<keyword id="KW-0393">Immunoglobulin domain</keyword>
<keyword id="KW-0472">Membrane</keyword>
<keyword id="KW-0597">Phosphoprotein</keyword>
<keyword id="KW-0675">Receptor</keyword>
<keyword id="KW-1185">Reference proteome</keyword>
<keyword id="KW-0732">Signal</keyword>
<keyword id="KW-0812">Transmembrane</keyword>
<keyword id="KW-1133">Transmembrane helix</keyword>
<gene>
    <name type="primary">Fcgrt</name>
    <name type="synonym">Fcrn</name>
</gene>
<name>FCGRN_MOUSE</name>
<evidence type="ECO:0000250" key="1">
    <source>
        <dbReference type="UniProtKB" id="P13599"/>
    </source>
</evidence>
<evidence type="ECO:0000250" key="2">
    <source>
        <dbReference type="UniProtKB" id="P55899"/>
    </source>
</evidence>
<evidence type="ECO:0000255" key="3"/>
<evidence type="ECO:0000255" key="4">
    <source>
        <dbReference type="PROSITE-ProRule" id="PRU00114"/>
    </source>
</evidence>
<evidence type="ECO:0000256" key="5">
    <source>
        <dbReference type="SAM" id="MobiDB-lite"/>
    </source>
</evidence>
<evidence type="ECO:0000269" key="6">
    <source>
    </source>
</evidence>
<evidence type="ECO:0000305" key="7"/>
<reference key="1">
    <citation type="journal article" date="1995" name="J. Immunol.">
        <title>Structural and phylogenetic analysis of the MHC class I-like Fc receptor gene.</title>
        <authorList>
            <person name="Kandil E."/>
            <person name="Noguchi M."/>
            <person name="Ishibashi T."/>
            <person name="Kasahara M."/>
        </authorList>
    </citation>
    <scope>NUCLEOTIDE SEQUENCE [GENOMIC DNA / MRNA]</scope>
    <source>
        <strain>A/J</strain>
        <strain>AKR/J</strain>
        <strain>BALB/cJ</strain>
        <strain>C3H/HeJ</strain>
        <strain>DBA/2J</strain>
        <strain>P/J</strain>
        <strain>TW75</strain>
        <tissue>Small intestine</tissue>
    </source>
</reference>
<reference key="2">
    <citation type="journal article" date="1993" name="J. Immunol.">
        <title>Mouse MHC class I-like Fc receptor encoded outside the MHC.</title>
        <authorList>
            <person name="Ahouse J.J."/>
            <person name="Hagerman C.L."/>
            <person name="Mittal P."/>
            <person name="Gilbert D.J."/>
            <person name="Copeland N.G."/>
            <person name="Jenkins N.A."/>
            <person name="Simister N.E."/>
        </authorList>
    </citation>
    <scope>NUCLEOTIDE SEQUENCE [MRNA]</scope>
    <scope>FUNCTION</scope>
    <scope>TISSUE SPECIFICITY</scope>
    <source>
        <strain>FVB/N</strain>
        <tissue>Small intestine</tissue>
    </source>
</reference>
<reference key="3">
    <citation type="submission" date="2009-01" db="UniProtKB">
        <authorList>
            <person name="Lubec G."/>
            <person name="Sunyer B."/>
            <person name="Chen W.-Q."/>
        </authorList>
    </citation>
    <scope>PROTEIN SEQUENCE OF 167-173</scope>
    <scope>IDENTIFICATION BY MASS SPECTROMETRY</scope>
    <source>
        <strain>OF1</strain>
        <tissue>Hippocampus</tissue>
    </source>
</reference>
<reference key="4">
    <citation type="journal article" date="2010" name="Cell">
        <title>A tissue-specific atlas of mouse protein phosphorylation and expression.</title>
        <authorList>
            <person name="Huttlin E.L."/>
            <person name="Jedrychowski M.P."/>
            <person name="Elias J.E."/>
            <person name="Goswami T."/>
            <person name="Rad R."/>
            <person name="Beausoleil S.A."/>
            <person name="Villen J."/>
            <person name="Haas W."/>
            <person name="Sowa M.E."/>
            <person name="Gygi S.P."/>
        </authorList>
    </citation>
    <scope>IDENTIFICATION BY MASS SPECTROMETRY [LARGE SCALE ANALYSIS]</scope>
    <source>
        <tissue>Kidney</tissue>
        <tissue>Liver</tissue>
    </source>
</reference>
<comment type="function">
    <text evidence="2 6">Cell surface receptor that transfers passive humoral immunity from the mother to the newborn. Binds to the Fc region of monomeric immunoglobulin gamma and mediates its selective uptake from milk (PubMed:7504013). IgG in the milk is bound at the apical surface of the intestinal epithelium. The resultant FcRn-IgG complexes are transcytosed across the intestinal epithelium and IgG is released from FcRn into blood or tissue fluids. Throughout life, contributes to effective humoral immunity by recycling IgG and extending its half-life in the circulation. Mechanistically, monomeric IgG binding to FcRn in acidic endosomes of endothelial and hematopoietic cells recycles IgG to the cell surface where it is released into the circulation. In addition of IgG, regulates homeostasis of the other most abundant circulating protein albumin/ALB.</text>
</comment>
<comment type="subunit">
    <text evidence="1 2">FcRn complex consists of two subunits: p51, and p14 which is equivalent to beta-2-microglobulin. It forms an MHC class I-like heterodimer. Interacts with albumin/ALB; this interaction regulates ALB homeostasis.</text>
</comment>
<comment type="subcellular location">
    <subcellularLocation>
        <location evidence="1">Cell membrane</location>
        <topology evidence="3">Single-pass type I membrane protein</topology>
    </subcellularLocation>
    <subcellularLocation>
        <location evidence="2">Endosome membrane</location>
    </subcellularLocation>
</comment>
<comment type="tissue specificity">
    <text evidence="6">Intestinal epithelium of suckling rodents. Expressed in neonatal intestine and fetal yolk sac.</text>
</comment>
<comment type="similarity">
    <text evidence="7">Belongs to the immunoglobulin superfamily.</text>
</comment>
<protein>
    <recommendedName>
        <fullName>IgG receptor FcRn large subunit p51</fullName>
        <shortName>FcRn</shortName>
    </recommendedName>
    <alternativeName>
        <fullName>IgG Fc fragment receptor transporter alpha chain</fullName>
    </alternativeName>
    <alternativeName>
        <fullName>Neonatal Fc receptor</fullName>
    </alternativeName>
</protein>
<organism>
    <name type="scientific">Mus musculus</name>
    <name type="common">Mouse</name>
    <dbReference type="NCBI Taxonomy" id="10090"/>
    <lineage>
        <taxon>Eukaryota</taxon>
        <taxon>Metazoa</taxon>
        <taxon>Chordata</taxon>
        <taxon>Craniata</taxon>
        <taxon>Vertebrata</taxon>
        <taxon>Euteleostomi</taxon>
        <taxon>Mammalia</taxon>
        <taxon>Eutheria</taxon>
        <taxon>Euarchontoglires</taxon>
        <taxon>Glires</taxon>
        <taxon>Rodentia</taxon>
        <taxon>Myomorpha</taxon>
        <taxon>Muroidea</taxon>
        <taxon>Muridae</taxon>
        <taxon>Murinae</taxon>
        <taxon>Mus</taxon>
        <taxon>Mus</taxon>
    </lineage>
</organism>
<feature type="signal peptide" evidence="2">
    <location>
        <begin position="1"/>
        <end position="21"/>
    </location>
</feature>
<feature type="chain" id="PRO_0000015159" description="IgG receptor FcRn large subunit p51" evidence="2">
    <location>
        <begin position="22"/>
        <end position="365"/>
    </location>
</feature>
<feature type="topological domain" description="Extracellular" evidence="3">
    <location>
        <begin position="22"/>
        <end position="297"/>
    </location>
</feature>
<feature type="transmembrane region" description="Helical" evidence="3">
    <location>
        <begin position="298"/>
        <end position="321"/>
    </location>
</feature>
<feature type="topological domain" description="Cytoplasmic" evidence="3">
    <location>
        <begin position="322"/>
        <end position="365"/>
    </location>
</feature>
<feature type="domain" description="Ig-like C1-type" evidence="4">
    <location>
        <begin position="202"/>
        <end position="289"/>
    </location>
</feature>
<feature type="region of interest" description="Alpha-1" evidence="1">
    <location>
        <begin position="22"/>
        <end position="110"/>
    </location>
</feature>
<feature type="region of interest" description="Alpha-2" evidence="1">
    <location>
        <begin position="111"/>
        <end position="200"/>
    </location>
</feature>
<feature type="region of interest" description="Alpha-3" evidence="1">
    <location>
        <begin position="201"/>
        <end position="290"/>
    </location>
</feature>
<feature type="region of interest" description="Connecting peptide">
    <location>
        <begin position="291"/>
        <end position="297"/>
    </location>
</feature>
<feature type="region of interest" description="Disordered" evidence="5">
    <location>
        <begin position="343"/>
        <end position="365"/>
    </location>
</feature>
<feature type="modified residue" description="Phosphoserine" evidence="2">
    <location>
        <position position="334"/>
    </location>
</feature>
<feature type="glycosylation site" description="N-linked (GlcNAc...) asparagine" evidence="3">
    <location>
        <position position="108"/>
    </location>
</feature>
<feature type="glycosylation site" description="N-linked (GlcNAc...) asparagine" evidence="3">
    <location>
        <position position="125"/>
    </location>
</feature>
<feature type="glycosylation site" description="N-linked (GlcNAc...) asparagine" evidence="3">
    <location>
        <position position="149"/>
    </location>
</feature>
<feature type="glycosylation site" description="N-linked (GlcNAc...) asparagine" evidence="3">
    <location>
        <position position="246"/>
    </location>
</feature>
<feature type="disulfide bond" evidence="4">
    <location>
        <begin position="119"/>
        <end position="182"/>
    </location>
</feature>
<feature type="disulfide bond" evidence="4">
    <location>
        <begin position="221"/>
        <end position="275"/>
    </location>
</feature>
<feature type="sequence variant" description="In strain: FVB/N.">
    <original>M</original>
    <variation>V</variation>
    <location>
        <position position="73"/>
    </location>
</feature>
<feature type="sequence variant" description="In strain: P/J.">
    <original>Y</original>
    <variation>F</variation>
    <location>
        <position position="111"/>
    </location>
</feature>